<keyword id="KW-1185">Reference proteome</keyword>
<keyword id="KW-0687">Ribonucleoprotein</keyword>
<keyword id="KW-0689">Ribosomal protein</keyword>
<keyword id="KW-0694">RNA-binding</keyword>
<keyword id="KW-0699">rRNA-binding</keyword>
<organism>
    <name type="scientific">Acholeplasma laidlawii (strain PG-8A)</name>
    <dbReference type="NCBI Taxonomy" id="441768"/>
    <lineage>
        <taxon>Bacteria</taxon>
        <taxon>Bacillati</taxon>
        <taxon>Mycoplasmatota</taxon>
        <taxon>Mollicutes</taxon>
        <taxon>Acholeplasmatales</taxon>
        <taxon>Acholeplasmataceae</taxon>
        <taxon>Acholeplasma</taxon>
    </lineage>
</organism>
<reference key="1">
    <citation type="journal article" date="2011" name="J. Bacteriol.">
        <title>Complete genome and proteome of Acholeplasma laidlawii.</title>
        <authorList>
            <person name="Lazarev V.N."/>
            <person name="Levitskii S.A."/>
            <person name="Basovskii Y.I."/>
            <person name="Chukin M.M."/>
            <person name="Akopian T.A."/>
            <person name="Vereshchagin V.V."/>
            <person name="Kostrjukova E.S."/>
            <person name="Kovaleva G.Y."/>
            <person name="Kazanov M.D."/>
            <person name="Malko D.B."/>
            <person name="Vitreschak A.G."/>
            <person name="Sernova N.V."/>
            <person name="Gelfand M.S."/>
            <person name="Demina I.A."/>
            <person name="Serebryakova M.V."/>
            <person name="Galyamina M.A."/>
            <person name="Vtyurin N.N."/>
            <person name="Rogov S.I."/>
            <person name="Alexeev D.G."/>
            <person name="Ladygina V.G."/>
            <person name="Govorun V.M."/>
        </authorList>
    </citation>
    <scope>NUCLEOTIDE SEQUENCE [LARGE SCALE GENOMIC DNA]</scope>
    <source>
        <strain>PG-8A</strain>
    </source>
</reference>
<proteinExistence type="inferred from homology"/>
<feature type="chain" id="PRO_1000086967" description="Large ribosomal subunit protein bL21">
    <location>
        <begin position="1"/>
        <end position="99"/>
    </location>
</feature>
<evidence type="ECO:0000255" key="1">
    <source>
        <dbReference type="HAMAP-Rule" id="MF_01363"/>
    </source>
</evidence>
<evidence type="ECO:0000305" key="2"/>
<comment type="function">
    <text evidence="1">This protein binds to 23S rRNA in the presence of protein L20.</text>
</comment>
<comment type="subunit">
    <text evidence="1">Part of the 50S ribosomal subunit. Contacts protein L20.</text>
</comment>
<comment type="similarity">
    <text evidence="1">Belongs to the bacterial ribosomal protein bL21 family.</text>
</comment>
<accession>A9NF54</accession>
<dbReference type="EMBL" id="CP000896">
    <property type="protein sequence ID" value="ABX80984.1"/>
    <property type="molecule type" value="Genomic_DNA"/>
</dbReference>
<dbReference type="RefSeq" id="WP_012242315.1">
    <property type="nucleotide sequence ID" value="NC_010163.1"/>
</dbReference>
<dbReference type="SMR" id="A9NF54"/>
<dbReference type="STRING" id="441768.ACL_0362"/>
<dbReference type="GeneID" id="41338544"/>
<dbReference type="KEGG" id="acl:ACL_0362"/>
<dbReference type="eggNOG" id="COG0261">
    <property type="taxonomic scope" value="Bacteria"/>
</dbReference>
<dbReference type="HOGENOM" id="CLU_061463_3_1_14"/>
<dbReference type="OrthoDB" id="9813334at2"/>
<dbReference type="Proteomes" id="UP000008558">
    <property type="component" value="Chromosome"/>
</dbReference>
<dbReference type="GO" id="GO:0005737">
    <property type="term" value="C:cytoplasm"/>
    <property type="evidence" value="ECO:0007669"/>
    <property type="project" value="UniProtKB-ARBA"/>
</dbReference>
<dbReference type="GO" id="GO:1990904">
    <property type="term" value="C:ribonucleoprotein complex"/>
    <property type="evidence" value="ECO:0007669"/>
    <property type="project" value="UniProtKB-KW"/>
</dbReference>
<dbReference type="GO" id="GO:0005840">
    <property type="term" value="C:ribosome"/>
    <property type="evidence" value="ECO:0007669"/>
    <property type="project" value="UniProtKB-KW"/>
</dbReference>
<dbReference type="GO" id="GO:0019843">
    <property type="term" value="F:rRNA binding"/>
    <property type="evidence" value="ECO:0007669"/>
    <property type="project" value="UniProtKB-UniRule"/>
</dbReference>
<dbReference type="GO" id="GO:0003735">
    <property type="term" value="F:structural constituent of ribosome"/>
    <property type="evidence" value="ECO:0007669"/>
    <property type="project" value="InterPro"/>
</dbReference>
<dbReference type="GO" id="GO:0006412">
    <property type="term" value="P:translation"/>
    <property type="evidence" value="ECO:0007669"/>
    <property type="project" value="UniProtKB-UniRule"/>
</dbReference>
<dbReference type="HAMAP" id="MF_01363">
    <property type="entry name" value="Ribosomal_bL21"/>
    <property type="match status" value="1"/>
</dbReference>
<dbReference type="InterPro" id="IPR028909">
    <property type="entry name" value="bL21-like"/>
</dbReference>
<dbReference type="InterPro" id="IPR036164">
    <property type="entry name" value="bL21-like_sf"/>
</dbReference>
<dbReference type="InterPro" id="IPR001787">
    <property type="entry name" value="Ribosomal_bL21"/>
</dbReference>
<dbReference type="InterPro" id="IPR018258">
    <property type="entry name" value="Ribosomal_bL21_CS"/>
</dbReference>
<dbReference type="NCBIfam" id="TIGR00061">
    <property type="entry name" value="L21"/>
    <property type="match status" value="1"/>
</dbReference>
<dbReference type="PANTHER" id="PTHR21349">
    <property type="entry name" value="50S RIBOSOMAL PROTEIN L21"/>
    <property type="match status" value="1"/>
</dbReference>
<dbReference type="PANTHER" id="PTHR21349:SF0">
    <property type="entry name" value="LARGE RIBOSOMAL SUBUNIT PROTEIN BL21M"/>
    <property type="match status" value="1"/>
</dbReference>
<dbReference type="Pfam" id="PF00829">
    <property type="entry name" value="Ribosomal_L21p"/>
    <property type="match status" value="1"/>
</dbReference>
<dbReference type="SUPFAM" id="SSF141091">
    <property type="entry name" value="L21p-like"/>
    <property type="match status" value="1"/>
</dbReference>
<dbReference type="PROSITE" id="PS01169">
    <property type="entry name" value="RIBOSOMAL_L21"/>
    <property type="match status" value="1"/>
</dbReference>
<gene>
    <name evidence="1" type="primary">rplU</name>
    <name type="ordered locus">ACL_0362</name>
</gene>
<name>RL21_ACHLI</name>
<sequence>MFAIIQTGGKQVKVTEGQEIYVEKLDVEAGDTFEFTEVLATSDKIGHPYVEGAKVVAEVIKQGRQRKIIVFKYKRRKNYRRKQGHRQAYTKLVVKSIQG</sequence>
<protein>
    <recommendedName>
        <fullName evidence="1">Large ribosomal subunit protein bL21</fullName>
    </recommendedName>
    <alternativeName>
        <fullName evidence="2">50S ribosomal protein L21</fullName>
    </alternativeName>
</protein>